<feature type="chain" id="PRO_0000123167" description="Small ribosomal subunit protein uS11">
    <location>
        <begin position="1"/>
        <end position="136"/>
    </location>
</feature>
<keyword id="KW-0687">Ribonucleoprotein</keyword>
<keyword id="KW-0689">Ribosomal protein</keyword>
<keyword id="KW-0694">RNA-binding</keyword>
<keyword id="KW-0699">rRNA-binding</keyword>
<accession>Q72NI6</accession>
<comment type="function">
    <text evidence="1">Located on the platform of the 30S subunit, it bridges several disparate RNA helices of the 16S rRNA. Forms part of the Shine-Dalgarno cleft in the 70S ribosome.</text>
</comment>
<comment type="subunit">
    <text evidence="1">Part of the 30S ribosomal subunit. Interacts with proteins S7 and S18. Binds to IF-3.</text>
</comment>
<comment type="similarity">
    <text evidence="1">Belongs to the universal ribosomal protein uS11 family.</text>
</comment>
<gene>
    <name evidence="1" type="primary">rpsK</name>
    <name type="ordered locus">LIC_12848</name>
</gene>
<evidence type="ECO:0000255" key="1">
    <source>
        <dbReference type="HAMAP-Rule" id="MF_01310"/>
    </source>
</evidence>
<evidence type="ECO:0000305" key="2"/>
<sequence length="136" mass="14702">MADDKKSVKKEKKVKKKEKKIVPRGKVYITASFNNTIVTITDMAGNTISWSTSGAMGFRGSKKSTPYAAQIAAGNAAEKAMDSAGLQEVDVMVSGPGIGRESAIRSLVARGLNIKMIKDVTPLPHNGCRPRKRRRV</sequence>
<proteinExistence type="inferred from homology"/>
<protein>
    <recommendedName>
        <fullName evidence="1">Small ribosomal subunit protein uS11</fullName>
    </recommendedName>
    <alternativeName>
        <fullName evidence="2">30S ribosomal protein S11</fullName>
    </alternativeName>
</protein>
<organism>
    <name type="scientific">Leptospira interrogans serogroup Icterohaemorrhagiae serovar copenhageni (strain Fiocruz L1-130)</name>
    <dbReference type="NCBI Taxonomy" id="267671"/>
    <lineage>
        <taxon>Bacteria</taxon>
        <taxon>Pseudomonadati</taxon>
        <taxon>Spirochaetota</taxon>
        <taxon>Spirochaetia</taxon>
        <taxon>Leptospirales</taxon>
        <taxon>Leptospiraceae</taxon>
        <taxon>Leptospira</taxon>
    </lineage>
</organism>
<name>RS11_LEPIC</name>
<reference key="1">
    <citation type="journal article" date="2004" name="J. Bacteriol.">
        <title>Comparative genomics of two Leptospira interrogans serovars reveals novel insights into physiology and pathogenesis.</title>
        <authorList>
            <person name="Nascimento A.L.T.O."/>
            <person name="Ko A.I."/>
            <person name="Martins E.A.L."/>
            <person name="Monteiro-Vitorello C.B."/>
            <person name="Ho P.L."/>
            <person name="Haake D.A."/>
            <person name="Verjovski-Almeida S."/>
            <person name="Hartskeerl R.A."/>
            <person name="Marques M.V."/>
            <person name="Oliveira M.C."/>
            <person name="Menck C.F.M."/>
            <person name="Leite L.C.C."/>
            <person name="Carrer H."/>
            <person name="Coutinho L.L."/>
            <person name="Degrave W.M."/>
            <person name="Dellagostin O.A."/>
            <person name="El-Dorry H."/>
            <person name="Ferro E.S."/>
            <person name="Ferro M.I.T."/>
            <person name="Furlan L.R."/>
            <person name="Gamberini M."/>
            <person name="Giglioti E.A."/>
            <person name="Goes-Neto A."/>
            <person name="Goldman G.H."/>
            <person name="Goldman M.H.S."/>
            <person name="Harakava R."/>
            <person name="Jeronimo S.M.B."/>
            <person name="Junqueira-de-Azevedo I.L.M."/>
            <person name="Kimura E.T."/>
            <person name="Kuramae E.E."/>
            <person name="Lemos E.G.M."/>
            <person name="Lemos M.V.F."/>
            <person name="Marino C.L."/>
            <person name="Nunes L.R."/>
            <person name="de Oliveira R.C."/>
            <person name="Pereira G.G."/>
            <person name="Reis M.S."/>
            <person name="Schriefer A."/>
            <person name="Siqueira W.J."/>
            <person name="Sommer P."/>
            <person name="Tsai S.M."/>
            <person name="Simpson A.J.G."/>
            <person name="Ferro J.A."/>
            <person name="Camargo L.E.A."/>
            <person name="Kitajima J.P."/>
            <person name="Setubal J.C."/>
            <person name="Van Sluys M.A."/>
        </authorList>
    </citation>
    <scope>NUCLEOTIDE SEQUENCE [LARGE SCALE GENOMIC DNA]</scope>
    <source>
        <strain>Fiocruz L1-130</strain>
    </source>
</reference>
<dbReference type="EMBL" id="AE016823">
    <property type="protein sequence ID" value="AAS71401.1"/>
    <property type="molecule type" value="Genomic_DNA"/>
</dbReference>
<dbReference type="RefSeq" id="WP_000752686.1">
    <property type="nucleotide sequence ID" value="NC_005823.1"/>
</dbReference>
<dbReference type="SMR" id="Q72NI6"/>
<dbReference type="GeneID" id="61172975"/>
<dbReference type="KEGG" id="lic:LIC_12848"/>
<dbReference type="HOGENOM" id="CLU_072439_5_0_12"/>
<dbReference type="Proteomes" id="UP000007037">
    <property type="component" value="Chromosome I"/>
</dbReference>
<dbReference type="GO" id="GO:1990904">
    <property type="term" value="C:ribonucleoprotein complex"/>
    <property type="evidence" value="ECO:0007669"/>
    <property type="project" value="UniProtKB-KW"/>
</dbReference>
<dbReference type="GO" id="GO:0005840">
    <property type="term" value="C:ribosome"/>
    <property type="evidence" value="ECO:0007669"/>
    <property type="project" value="UniProtKB-KW"/>
</dbReference>
<dbReference type="GO" id="GO:0019843">
    <property type="term" value="F:rRNA binding"/>
    <property type="evidence" value="ECO:0007669"/>
    <property type="project" value="UniProtKB-UniRule"/>
</dbReference>
<dbReference type="GO" id="GO:0003735">
    <property type="term" value="F:structural constituent of ribosome"/>
    <property type="evidence" value="ECO:0007669"/>
    <property type="project" value="InterPro"/>
</dbReference>
<dbReference type="GO" id="GO:0006412">
    <property type="term" value="P:translation"/>
    <property type="evidence" value="ECO:0007669"/>
    <property type="project" value="UniProtKB-UniRule"/>
</dbReference>
<dbReference type="FunFam" id="3.30.420.80:FF:000012">
    <property type="entry name" value="30S ribosomal protein S11"/>
    <property type="match status" value="1"/>
</dbReference>
<dbReference type="Gene3D" id="3.30.420.80">
    <property type="entry name" value="Ribosomal protein S11"/>
    <property type="match status" value="1"/>
</dbReference>
<dbReference type="HAMAP" id="MF_01310">
    <property type="entry name" value="Ribosomal_uS11"/>
    <property type="match status" value="1"/>
</dbReference>
<dbReference type="InterPro" id="IPR001971">
    <property type="entry name" value="Ribosomal_uS11"/>
</dbReference>
<dbReference type="InterPro" id="IPR019981">
    <property type="entry name" value="Ribosomal_uS11_bac-type"/>
</dbReference>
<dbReference type="InterPro" id="IPR018102">
    <property type="entry name" value="Ribosomal_uS11_CS"/>
</dbReference>
<dbReference type="InterPro" id="IPR036967">
    <property type="entry name" value="Ribosomal_uS11_sf"/>
</dbReference>
<dbReference type="NCBIfam" id="NF003698">
    <property type="entry name" value="PRK05309.1"/>
    <property type="match status" value="1"/>
</dbReference>
<dbReference type="NCBIfam" id="TIGR03632">
    <property type="entry name" value="uS11_bact"/>
    <property type="match status" value="1"/>
</dbReference>
<dbReference type="PANTHER" id="PTHR11759">
    <property type="entry name" value="40S RIBOSOMAL PROTEIN S14/30S RIBOSOMAL PROTEIN S11"/>
    <property type="match status" value="1"/>
</dbReference>
<dbReference type="Pfam" id="PF00411">
    <property type="entry name" value="Ribosomal_S11"/>
    <property type="match status" value="1"/>
</dbReference>
<dbReference type="PIRSF" id="PIRSF002131">
    <property type="entry name" value="Ribosomal_S11"/>
    <property type="match status" value="1"/>
</dbReference>
<dbReference type="SUPFAM" id="SSF53137">
    <property type="entry name" value="Translational machinery components"/>
    <property type="match status" value="1"/>
</dbReference>
<dbReference type="PROSITE" id="PS00054">
    <property type="entry name" value="RIBOSOMAL_S11"/>
    <property type="match status" value="1"/>
</dbReference>